<protein>
    <recommendedName>
        <fullName evidence="2">U-actitoxin-Ate1</fullName>
        <shortName evidence="2">U-AITX-Ate1</shortName>
    </recommendedName>
</protein>
<reference key="1">
    <citation type="journal article" date="2019" name="Toxicon">
        <title>Structural and functional characterisation of a novel peptide from the Australian sea anemone Actinia tenebrosa.</title>
        <authorList>
            <person name="Elnahriry K.A."/>
            <person name="Wai D.C.C."/>
            <person name="Krishnarjuna B."/>
            <person name="Badawy N.N."/>
            <person name="Chittoor B."/>
            <person name="MacRaild C.A."/>
            <person name="Williams-Noonan B.J."/>
            <person name="Surm J.M."/>
            <person name="Chalmers D.K."/>
            <person name="Zhang A.H."/>
            <person name="Peigneur S."/>
            <person name="Mobli M."/>
            <person name="Tytgat J."/>
            <person name="Prentis P."/>
            <person name="Norton R.S."/>
        </authorList>
    </citation>
    <scope>NUCLEOTIDE SEQUENCE [MRNA]</scope>
    <scope>SYNTHESIS OF 16-28</scope>
    <scope>STRUCTURE BY NMR OF 16-28</scope>
    <scope>DISULFIDE BOND</scope>
    <scope>SUBUNIT</scope>
</reference>
<name>ACR1_ACTTE</name>
<evidence type="ECO:0000269" key="1">
    <source>
    </source>
</evidence>
<evidence type="ECO:0000303" key="2">
    <source>
    </source>
</evidence>
<evidence type="ECO:0000305" key="3">
    <source>
    </source>
</evidence>
<evidence type="ECO:0007744" key="4">
    <source>
        <dbReference type="PDB" id="6OQP"/>
    </source>
</evidence>
<organism>
    <name type="scientific">Actinia tenebrosa</name>
    <name type="common">Australian red waratah sea anemone</name>
    <dbReference type="NCBI Taxonomy" id="6105"/>
    <lineage>
        <taxon>Eukaryota</taxon>
        <taxon>Metazoa</taxon>
        <taxon>Cnidaria</taxon>
        <taxon>Anthozoa</taxon>
        <taxon>Hexacorallia</taxon>
        <taxon>Actiniaria</taxon>
        <taxon>Actiniidae</taxon>
        <taxon>Actinia</taxon>
    </lineage>
</organism>
<feature type="signal peptide" evidence="3">
    <location>
        <begin position="1"/>
        <end position="15"/>
    </location>
</feature>
<feature type="peptide" id="PRO_0000448542" description="U-actitoxin-Ate1" evidence="3">
    <location>
        <begin position="16"/>
        <end position="28"/>
    </location>
</feature>
<feature type="disulfide bond" evidence="1 4">
    <location>
        <begin position="20"/>
        <end position="26"/>
    </location>
</feature>
<comment type="function">
    <text evidence="1">Probable toxin expected to be employed in prey capture and/or defense against predators (based on its abundance in tentacles). Has only a weak affinity for lipid membranes (PubMed:31302115). Shows moderate cytotoxic activity against breast cancer cell lines (MCF-7 and MDA-MB-231) (PubMed:31302115).</text>
</comment>
<comment type="subunit">
    <text evidence="1">Monomer in solution.</text>
</comment>
<comment type="subcellular location">
    <subcellularLocation>
        <location evidence="3">Secreted</location>
    </subcellularLocation>
    <subcellularLocation>
        <location evidence="3">Nematocyst</location>
    </subcellularLocation>
</comment>
<comment type="tissue specificity">
    <text evidence="1">Highly expressed in the tentacles (PubMed:31302115). Weakly expressed in acrorhagi and mesenteric filaments (PubMed:31302115).</text>
</comment>
<comment type="PTM">
    <text evidence="3">May be N-glycosylated at Asn-22. Activity with this modification has not be tested.</text>
</comment>
<comment type="miscellaneous">
    <text evidence="1">The 26-Cys-Pro-27 bond exists only in the trans-isomerization.</text>
</comment>
<comment type="miscellaneous">
    <text evidence="1">Negative results: does not show activity on voltage-gated potassium channels (Kv1.1-Kv1.6, Kv2.1, Kv4.2, and Shaker IR), voltage-gated sodium channels (Nav1.2, Nav1.4, Nav1.5, and Nav1.6), and the insect channel BgNav1. In vivo, does not induce change in behavior and mortality rates in crustacea (redclaw crayfish).</text>
</comment>
<comment type="online information" name="Biological Magnetic Resonance Data Bank">
    <link uri="https://bmrb.io/data_library/summary/index.php?bmrbId=30607"/>
</comment>
<proteinExistence type="evidence at protein level"/>
<keyword id="KW-0002">3D-structure</keyword>
<keyword id="KW-1015">Disulfide bond</keyword>
<keyword id="KW-0166">Nematocyst</keyword>
<keyword id="KW-1185">Reference proteome</keyword>
<keyword id="KW-0964">Secreted</keyword>
<keyword id="KW-0732">Signal</keyword>
<keyword id="KW-0800">Toxin</keyword>
<dbReference type="PDB" id="6OQP">
    <property type="method" value="NMR"/>
    <property type="chains" value="A=16-28"/>
</dbReference>
<dbReference type="PDBsum" id="6OQP"/>
<dbReference type="InParanoid" id="P0DQJ2"/>
<dbReference type="Proteomes" id="UP000515163">
    <property type="component" value="Unplaced"/>
</dbReference>
<dbReference type="GO" id="GO:0005576">
    <property type="term" value="C:extracellular region"/>
    <property type="evidence" value="ECO:0007669"/>
    <property type="project" value="UniProtKB-SubCell"/>
</dbReference>
<dbReference type="GO" id="GO:0042151">
    <property type="term" value="C:nematocyst"/>
    <property type="evidence" value="ECO:0007669"/>
    <property type="project" value="UniProtKB-SubCell"/>
</dbReference>
<dbReference type="GO" id="GO:0090729">
    <property type="term" value="F:toxin activity"/>
    <property type="evidence" value="ECO:0007669"/>
    <property type="project" value="UniProtKB-KW"/>
</dbReference>
<sequence length="28" mass="3189">MSLILIFFAFTVLKSSKWICANRSVCPI</sequence>
<accession>P0DQJ2</accession>